<reference key="1">
    <citation type="journal article" date="2000" name="DNA Res.">
        <title>Structural analysis of Arabidopsis thaliana chromosome 5. X. Sequence features of the regions of 3,076,755 bp covered by sixty P1 and TAC clones.</title>
        <authorList>
            <person name="Sato S."/>
            <person name="Nakamura Y."/>
            <person name="Kaneko T."/>
            <person name="Katoh T."/>
            <person name="Asamizu E."/>
            <person name="Kotani H."/>
            <person name="Tabata S."/>
        </authorList>
    </citation>
    <scope>NUCLEOTIDE SEQUENCE [LARGE SCALE GENOMIC DNA]</scope>
    <source>
        <strain>cv. Columbia</strain>
    </source>
</reference>
<reference key="2">
    <citation type="journal article" date="2017" name="Plant J.">
        <title>Araport11: a complete reannotation of the Arabidopsis thaliana reference genome.</title>
        <authorList>
            <person name="Cheng C.Y."/>
            <person name="Krishnakumar V."/>
            <person name="Chan A.P."/>
            <person name="Thibaud-Nissen F."/>
            <person name="Schobel S."/>
            <person name="Town C.D."/>
        </authorList>
    </citation>
    <scope>GENOME REANNOTATION</scope>
    <source>
        <strain>cv. Columbia</strain>
    </source>
</reference>
<reference key="3">
    <citation type="journal article" date="2002" name="Science">
        <title>Functional annotation of a full-length Arabidopsis cDNA collection.</title>
        <authorList>
            <person name="Seki M."/>
            <person name="Narusaka M."/>
            <person name="Kamiya A."/>
            <person name="Ishida J."/>
            <person name="Satou M."/>
            <person name="Sakurai T."/>
            <person name="Nakajima M."/>
            <person name="Enju A."/>
            <person name="Akiyama K."/>
            <person name="Oono Y."/>
            <person name="Muramatsu M."/>
            <person name="Hayashizaki Y."/>
            <person name="Kawai J."/>
            <person name="Carninci P."/>
            <person name="Itoh M."/>
            <person name="Ishii Y."/>
            <person name="Arakawa T."/>
            <person name="Shibata K."/>
            <person name="Shinagawa A."/>
            <person name="Shinozaki K."/>
        </authorList>
    </citation>
    <scope>NUCLEOTIDE SEQUENCE [LARGE SCALE MRNA]</scope>
    <source>
        <strain>cv. Columbia</strain>
    </source>
</reference>
<reference key="4">
    <citation type="journal article" date="2003" name="Science">
        <title>Empirical analysis of transcriptional activity in the Arabidopsis genome.</title>
        <authorList>
            <person name="Yamada K."/>
            <person name="Lim J."/>
            <person name="Dale J.M."/>
            <person name="Chen H."/>
            <person name="Shinn P."/>
            <person name="Palm C.J."/>
            <person name="Southwick A.M."/>
            <person name="Wu H.C."/>
            <person name="Kim C.J."/>
            <person name="Nguyen M."/>
            <person name="Pham P.K."/>
            <person name="Cheuk R.F."/>
            <person name="Karlin-Newmann G."/>
            <person name="Liu S.X."/>
            <person name="Lam B."/>
            <person name="Sakano H."/>
            <person name="Wu T."/>
            <person name="Yu G."/>
            <person name="Miranda M."/>
            <person name="Quach H.L."/>
            <person name="Tripp M."/>
            <person name="Chang C.H."/>
            <person name="Lee J.M."/>
            <person name="Toriumi M.J."/>
            <person name="Chan M.M."/>
            <person name="Tang C.C."/>
            <person name="Onodera C.S."/>
            <person name="Deng J.M."/>
            <person name="Akiyama K."/>
            <person name="Ansari Y."/>
            <person name="Arakawa T."/>
            <person name="Banh J."/>
            <person name="Banno F."/>
            <person name="Bowser L."/>
            <person name="Brooks S.Y."/>
            <person name="Carninci P."/>
            <person name="Chao Q."/>
            <person name="Choy N."/>
            <person name="Enju A."/>
            <person name="Goldsmith A.D."/>
            <person name="Gurjal M."/>
            <person name="Hansen N.F."/>
            <person name="Hayashizaki Y."/>
            <person name="Johnson-Hopson C."/>
            <person name="Hsuan V.W."/>
            <person name="Iida K."/>
            <person name="Karnes M."/>
            <person name="Khan S."/>
            <person name="Koesema E."/>
            <person name="Ishida J."/>
            <person name="Jiang P.X."/>
            <person name="Jones T."/>
            <person name="Kawai J."/>
            <person name="Kamiya A."/>
            <person name="Meyers C."/>
            <person name="Nakajima M."/>
            <person name="Narusaka M."/>
            <person name="Seki M."/>
            <person name="Sakurai T."/>
            <person name="Satou M."/>
            <person name="Tamse R."/>
            <person name="Vaysberg M."/>
            <person name="Wallender E.K."/>
            <person name="Wong C."/>
            <person name="Yamamura Y."/>
            <person name="Yuan S."/>
            <person name="Shinozaki K."/>
            <person name="Davis R.W."/>
            <person name="Theologis A."/>
            <person name="Ecker J.R."/>
        </authorList>
    </citation>
    <scope>NUCLEOTIDE SEQUENCE [LARGE SCALE MRNA]</scope>
    <source>
        <strain>cv. Columbia</strain>
    </source>
</reference>
<reference key="5">
    <citation type="journal article" date="2008" name="Plant Cell">
        <title>Arabidopsis 10-formyl tetrahydrofolate deformylases are essential for photorespiration.</title>
        <authorList>
            <person name="Collakova E."/>
            <person name="Goyer A."/>
            <person name="Naponelli V."/>
            <person name="Krassovskaya I."/>
            <person name="Gregory J.F. III"/>
            <person name="Hanson A.D."/>
            <person name="Shachar-Hill Y."/>
        </authorList>
    </citation>
    <scope>FUNCTION</scope>
    <scope>CATALYTIC ACTIVITY</scope>
    <scope>DISRUPTION PHENOTYPE</scope>
    <scope>SUBCELLULAR LOCATION</scope>
    <scope>TISSUE SPECIFICITY</scope>
</reference>
<accession>Q93YQ3</accession>
<gene>
    <name type="primary">PURU1</name>
    <name type="ordered locus">At5g47435</name>
    <name type="ORF">MNJ7.1</name>
</gene>
<organism>
    <name type="scientific">Arabidopsis thaliana</name>
    <name type="common">Mouse-ear cress</name>
    <dbReference type="NCBI Taxonomy" id="3702"/>
    <lineage>
        <taxon>Eukaryota</taxon>
        <taxon>Viridiplantae</taxon>
        <taxon>Streptophyta</taxon>
        <taxon>Embryophyta</taxon>
        <taxon>Tracheophyta</taxon>
        <taxon>Spermatophyta</taxon>
        <taxon>Magnoliopsida</taxon>
        <taxon>eudicotyledons</taxon>
        <taxon>Gunneridae</taxon>
        <taxon>Pentapetalae</taxon>
        <taxon>rosids</taxon>
        <taxon>malvids</taxon>
        <taxon>Brassicales</taxon>
        <taxon>Brassicaceae</taxon>
        <taxon>Camelineae</taxon>
        <taxon>Arabidopsis</taxon>
    </lineage>
</organism>
<evidence type="ECO:0000250" key="1"/>
<evidence type="ECO:0000255" key="2"/>
<evidence type="ECO:0000269" key="3">
    <source>
    </source>
</evidence>
<evidence type="ECO:0000305" key="4"/>
<comment type="function">
    <text evidence="3">Deformylase involved in photorespiration. Prevents excessive accumulation of 5-formyl tetrahydrofolate (THF), a potent inhibitor of the Gly decarboxylase/Ser hydroxymethyltransferase complex.</text>
</comment>
<comment type="catalytic activity">
    <reaction evidence="3">
        <text>(6R)-10-formyltetrahydrofolate + H2O = (6S)-5,6,7,8-tetrahydrofolate + formate + H(+)</text>
        <dbReference type="Rhea" id="RHEA:19833"/>
        <dbReference type="ChEBI" id="CHEBI:15377"/>
        <dbReference type="ChEBI" id="CHEBI:15378"/>
        <dbReference type="ChEBI" id="CHEBI:15740"/>
        <dbReference type="ChEBI" id="CHEBI:57453"/>
        <dbReference type="ChEBI" id="CHEBI:195366"/>
        <dbReference type="EC" id="3.5.1.10"/>
    </reaction>
</comment>
<comment type="subcellular location">
    <subcellularLocation>
        <location evidence="3">Mitochondrion</location>
    </subcellularLocation>
</comment>
<comment type="tissue specificity">
    <text evidence="3">Expressed in leaves, cotyledons, roots, seeds and flowers.</text>
</comment>
<comment type="disruption phenotype">
    <text evidence="3">No visible phenotype. Puru1 and puru2 double mutant shows a 70-fold increase in Gly levels and accumulates elevated levels of 5- and 10-formyl THF. Embryo development arrests between heart and early bent cotyledon stages, and mature seeds are shriveled, accumulate low amounts of lipids, and fail to germinate. Puru1 and puru2 double mutant is only conditionally lethal and is rescued by growth under nonphotorespiratory conditions. Puru1, puru2 and fold1 triple mutant shows no photorespiratory phenotype.</text>
</comment>
<comment type="similarity">
    <text evidence="4">Belongs to the PurU family.</text>
</comment>
<dbReference type="EC" id="3.5.1.10"/>
<dbReference type="EMBL" id="AB018117">
    <property type="status" value="NOT_ANNOTATED_CDS"/>
    <property type="molecule type" value="Genomic_DNA"/>
</dbReference>
<dbReference type="EMBL" id="CP002688">
    <property type="protein sequence ID" value="AED95511.1"/>
    <property type="molecule type" value="Genomic_DNA"/>
</dbReference>
<dbReference type="EMBL" id="CP002688">
    <property type="protein sequence ID" value="AED95512.1"/>
    <property type="molecule type" value="Genomic_DNA"/>
</dbReference>
<dbReference type="EMBL" id="AK117593">
    <property type="protein sequence ID" value="BAC42250.1"/>
    <property type="molecule type" value="mRNA"/>
</dbReference>
<dbReference type="EMBL" id="AY059833">
    <property type="protein sequence ID" value="AAL24315.1"/>
    <property type="molecule type" value="mRNA"/>
</dbReference>
<dbReference type="EMBL" id="AY081459">
    <property type="protein sequence ID" value="AAM10021.1"/>
    <property type="molecule type" value="mRNA"/>
</dbReference>
<dbReference type="RefSeq" id="NP_568682.1">
    <property type="nucleotide sequence ID" value="NM_124115.4"/>
</dbReference>
<dbReference type="RefSeq" id="NP_851145.1">
    <property type="nucleotide sequence ID" value="NM_180814.3"/>
</dbReference>
<dbReference type="SMR" id="Q93YQ3"/>
<dbReference type="BioGRID" id="20039">
    <property type="interactions" value="2"/>
</dbReference>
<dbReference type="FunCoup" id="Q93YQ3">
    <property type="interactions" value="111"/>
</dbReference>
<dbReference type="IntAct" id="Q93YQ3">
    <property type="interactions" value="1"/>
</dbReference>
<dbReference type="STRING" id="3702.Q93YQ3"/>
<dbReference type="iPTMnet" id="Q93YQ3"/>
<dbReference type="PaxDb" id="3702-AT5G47435.2"/>
<dbReference type="ProteomicsDB" id="224803"/>
<dbReference type="EnsemblPlants" id="AT5G47435.1">
    <property type="protein sequence ID" value="AT5G47435.1"/>
    <property type="gene ID" value="AT5G47435"/>
</dbReference>
<dbReference type="EnsemblPlants" id="AT5G47435.2">
    <property type="protein sequence ID" value="AT5G47435.2"/>
    <property type="gene ID" value="AT5G47435"/>
</dbReference>
<dbReference type="GeneID" id="834791"/>
<dbReference type="Gramene" id="AT5G47435.1">
    <property type="protein sequence ID" value="AT5G47435.1"/>
    <property type="gene ID" value="AT5G47435"/>
</dbReference>
<dbReference type="Gramene" id="AT5G47435.2">
    <property type="protein sequence ID" value="AT5G47435.2"/>
    <property type="gene ID" value="AT5G47435"/>
</dbReference>
<dbReference type="KEGG" id="ath:AT5G47435"/>
<dbReference type="Araport" id="AT5G47435"/>
<dbReference type="TAIR" id="AT5G47435"/>
<dbReference type="eggNOG" id="KOG3076">
    <property type="taxonomic scope" value="Eukaryota"/>
</dbReference>
<dbReference type="HOGENOM" id="CLU_038395_3_0_1"/>
<dbReference type="InParanoid" id="Q93YQ3"/>
<dbReference type="OMA" id="QILNIHH"/>
<dbReference type="OrthoDB" id="4239773at2759"/>
<dbReference type="PhylomeDB" id="Q93YQ3"/>
<dbReference type="PRO" id="PR:Q93YQ3"/>
<dbReference type="Proteomes" id="UP000006548">
    <property type="component" value="Chromosome 5"/>
</dbReference>
<dbReference type="ExpressionAtlas" id="Q93YQ3">
    <property type="expression patterns" value="baseline and differential"/>
</dbReference>
<dbReference type="GO" id="GO:0005739">
    <property type="term" value="C:mitochondrion"/>
    <property type="evidence" value="ECO:0000314"/>
    <property type="project" value="TAIR"/>
</dbReference>
<dbReference type="GO" id="GO:0008864">
    <property type="term" value="F:formyltetrahydrofolate deformylase activity"/>
    <property type="evidence" value="ECO:0007669"/>
    <property type="project" value="UniProtKB-EC"/>
</dbReference>
<dbReference type="GO" id="GO:0006189">
    <property type="term" value="P:'de novo' IMP biosynthetic process"/>
    <property type="evidence" value="ECO:0007669"/>
    <property type="project" value="InterPro"/>
</dbReference>
<dbReference type="GO" id="GO:0006730">
    <property type="term" value="P:one-carbon metabolic process"/>
    <property type="evidence" value="ECO:0007669"/>
    <property type="project" value="UniProtKB-KW"/>
</dbReference>
<dbReference type="GO" id="GO:0009853">
    <property type="term" value="P:photorespiration"/>
    <property type="evidence" value="ECO:0000315"/>
    <property type="project" value="TAIR"/>
</dbReference>
<dbReference type="GO" id="GO:0046653">
    <property type="term" value="P:tetrahydrofolate metabolic process"/>
    <property type="evidence" value="ECO:0000315"/>
    <property type="project" value="TAIR"/>
</dbReference>
<dbReference type="CDD" id="cd04875">
    <property type="entry name" value="ACT_F4HF-DF"/>
    <property type="match status" value="1"/>
</dbReference>
<dbReference type="CDD" id="cd08648">
    <property type="entry name" value="FMT_core_Formyl-FH4-Hydrolase_C"/>
    <property type="match status" value="1"/>
</dbReference>
<dbReference type="FunFam" id="3.40.50.170:FF:000016">
    <property type="entry name" value="Formyltetrahydrofolate deformylase 1, mitochondrial"/>
    <property type="match status" value="1"/>
</dbReference>
<dbReference type="FunFam" id="3.30.70.260:FF:000098">
    <property type="entry name" value="Formyltetrahydrofolate deformylase 2, mitochondrial"/>
    <property type="match status" value="1"/>
</dbReference>
<dbReference type="Gene3D" id="3.30.70.260">
    <property type="match status" value="1"/>
</dbReference>
<dbReference type="Gene3D" id="3.40.50.170">
    <property type="entry name" value="Formyl transferase, N-terminal domain"/>
    <property type="match status" value="1"/>
</dbReference>
<dbReference type="InterPro" id="IPR045865">
    <property type="entry name" value="ACT-like_dom_sf"/>
</dbReference>
<dbReference type="InterPro" id="IPR041729">
    <property type="entry name" value="Formyl-FH4-Hydrolase_C"/>
</dbReference>
<dbReference type="InterPro" id="IPR002376">
    <property type="entry name" value="Formyl_transf_N"/>
</dbReference>
<dbReference type="InterPro" id="IPR036477">
    <property type="entry name" value="Formyl_transf_N_sf"/>
</dbReference>
<dbReference type="InterPro" id="IPR004810">
    <property type="entry name" value="PurU"/>
</dbReference>
<dbReference type="InterPro" id="IPR044074">
    <property type="entry name" value="PurU_ACT"/>
</dbReference>
<dbReference type="NCBIfam" id="NF004684">
    <property type="entry name" value="PRK06027.1"/>
    <property type="match status" value="1"/>
</dbReference>
<dbReference type="PANTHER" id="PTHR42706">
    <property type="entry name" value="FORMYLTETRAHYDROFOLATE DEFORMYLASE"/>
    <property type="match status" value="1"/>
</dbReference>
<dbReference type="PANTHER" id="PTHR42706:SF4">
    <property type="entry name" value="FORMYLTETRAHYDROFOLATE DEFORMYLASE 1, MITOCHONDRIAL"/>
    <property type="match status" value="1"/>
</dbReference>
<dbReference type="Pfam" id="PF00551">
    <property type="entry name" value="Formyl_trans_N"/>
    <property type="match status" value="1"/>
</dbReference>
<dbReference type="PIRSF" id="PIRSF036480">
    <property type="entry name" value="FormyFH4_hydr"/>
    <property type="match status" value="1"/>
</dbReference>
<dbReference type="PRINTS" id="PR01575">
    <property type="entry name" value="FFH4HYDRLASE"/>
</dbReference>
<dbReference type="SUPFAM" id="SSF55021">
    <property type="entry name" value="ACT-like"/>
    <property type="match status" value="1"/>
</dbReference>
<dbReference type="SUPFAM" id="SSF53328">
    <property type="entry name" value="Formyltransferase"/>
    <property type="match status" value="1"/>
</dbReference>
<sequence>MIRRITERASGFAKNIPILKSSRFHGESLDSSVSPVLIPGVHVFHCQDAVGIVAKLSDCIAAKGGNILGYDVFVPENNNVFYSRSEFIFDPVKWPRSQVDEDFQTIAQRYGALNSVVRVPSIDPKYKIALLLSKQDHCLVEMLHKWQDGKLPVDITCVISNHERASNTHVMRFLERHGIPYHYVSTTKENKREDDILELVKDTDFLVLARYMQILSGNFLKGYGKDVINIHHGLLPSFKGGYPAKQAFDAGVKLIGATSHFVTEELDSGPIIEQMVESVSHRDNLRSFVQKSEDLEKKCLTRAIKSYCELRVLPYGTNKTVVF</sequence>
<proteinExistence type="evidence at protein level"/>
<protein>
    <recommendedName>
        <fullName>Formyltetrahydrofolate deformylase 1, mitochondrial</fullName>
        <ecNumber>3.5.1.10</ecNumber>
    </recommendedName>
</protein>
<name>PURU1_ARATH</name>
<feature type="transit peptide" description="Mitochondrion" evidence="2">
    <location>
        <begin position="1"/>
        <end position="25"/>
    </location>
</feature>
<feature type="chain" id="PRO_0000424342" description="Formyltetrahydrofolate deformylase 1, mitochondrial">
    <location>
        <begin position="26"/>
        <end position="323"/>
    </location>
</feature>
<feature type="domain" description="ACT">
    <location>
        <begin position="41"/>
        <end position="124"/>
    </location>
</feature>
<feature type="active site" evidence="1">
    <location>
        <position position="267"/>
    </location>
</feature>
<keyword id="KW-0378">Hydrolase</keyword>
<keyword id="KW-0496">Mitochondrion</keyword>
<keyword id="KW-0554">One-carbon metabolism</keyword>
<keyword id="KW-0601">Photorespiration</keyword>
<keyword id="KW-1185">Reference proteome</keyword>
<keyword id="KW-0809">Transit peptide</keyword>